<evidence type="ECO:0000255" key="1">
    <source>
        <dbReference type="HAMAP-Rule" id="MF_00169"/>
    </source>
</evidence>
<proteinExistence type="inferred from homology"/>
<keyword id="KW-0028">Amino-acid biosynthesis</keyword>
<keyword id="KW-0057">Aromatic amino acid biosynthesis</keyword>
<keyword id="KW-0456">Lyase</keyword>
<keyword id="KW-1185">Reference proteome</keyword>
<name>AROQ_SYNC1</name>
<comment type="function">
    <text evidence="1">Catalyzes a trans-dehydration via an enolate intermediate.</text>
</comment>
<comment type="catalytic activity">
    <reaction evidence="1">
        <text>3-dehydroquinate = 3-dehydroshikimate + H2O</text>
        <dbReference type="Rhea" id="RHEA:21096"/>
        <dbReference type="ChEBI" id="CHEBI:15377"/>
        <dbReference type="ChEBI" id="CHEBI:16630"/>
        <dbReference type="ChEBI" id="CHEBI:32364"/>
        <dbReference type="EC" id="4.2.1.10"/>
    </reaction>
</comment>
<comment type="pathway">
    <text evidence="1">Metabolic intermediate biosynthesis; chorismate biosynthesis; chorismate from D-erythrose 4-phosphate and phosphoenolpyruvate: step 3/7.</text>
</comment>
<comment type="subunit">
    <text evidence="1">Homododecamer.</text>
</comment>
<comment type="similarity">
    <text evidence="1">Belongs to the type-II 3-dehydroquinase family.</text>
</comment>
<reference key="1">
    <citation type="submission" date="2005-10" db="EMBL/GenBank/DDBJ databases">
        <title>Complete sequence of Pelobacter carbinolicus DSM 2380.</title>
        <authorList>
            <person name="Copeland A."/>
            <person name="Lucas S."/>
            <person name="Lapidus A."/>
            <person name="Barry K."/>
            <person name="Detter J.C."/>
            <person name="Glavina T."/>
            <person name="Hammon N."/>
            <person name="Israni S."/>
            <person name="Pitluck S."/>
            <person name="Chertkov O."/>
            <person name="Schmutz J."/>
            <person name="Larimer F."/>
            <person name="Land M."/>
            <person name="Kyrpides N."/>
            <person name="Ivanova N."/>
            <person name="Richardson P."/>
        </authorList>
    </citation>
    <scope>NUCLEOTIDE SEQUENCE [LARGE SCALE GENOMIC DNA]</scope>
    <source>
        <strain>DSM 2380 / NBRC 103641 / GraBd1</strain>
    </source>
</reference>
<dbReference type="EC" id="4.2.1.10" evidence="1"/>
<dbReference type="EMBL" id="CP000142">
    <property type="protein sequence ID" value="ABA89417.1"/>
    <property type="molecule type" value="Genomic_DNA"/>
</dbReference>
<dbReference type="RefSeq" id="WP_011341930.1">
    <property type="nucleotide sequence ID" value="NC_007498.2"/>
</dbReference>
<dbReference type="SMR" id="Q3A2J0"/>
<dbReference type="STRING" id="338963.Pcar_2178"/>
<dbReference type="KEGG" id="pca:Pcar_2178"/>
<dbReference type="eggNOG" id="COG0757">
    <property type="taxonomic scope" value="Bacteria"/>
</dbReference>
<dbReference type="HOGENOM" id="CLU_090968_1_0_7"/>
<dbReference type="OrthoDB" id="9790793at2"/>
<dbReference type="UniPathway" id="UPA00053">
    <property type="reaction ID" value="UER00086"/>
</dbReference>
<dbReference type="Proteomes" id="UP000002534">
    <property type="component" value="Chromosome"/>
</dbReference>
<dbReference type="GO" id="GO:0003855">
    <property type="term" value="F:3-dehydroquinate dehydratase activity"/>
    <property type="evidence" value="ECO:0007669"/>
    <property type="project" value="UniProtKB-UniRule"/>
</dbReference>
<dbReference type="GO" id="GO:0008652">
    <property type="term" value="P:amino acid biosynthetic process"/>
    <property type="evidence" value="ECO:0007669"/>
    <property type="project" value="UniProtKB-KW"/>
</dbReference>
<dbReference type="GO" id="GO:0009073">
    <property type="term" value="P:aromatic amino acid family biosynthetic process"/>
    <property type="evidence" value="ECO:0007669"/>
    <property type="project" value="UniProtKB-KW"/>
</dbReference>
<dbReference type="GO" id="GO:0009423">
    <property type="term" value="P:chorismate biosynthetic process"/>
    <property type="evidence" value="ECO:0007669"/>
    <property type="project" value="UniProtKB-UniRule"/>
</dbReference>
<dbReference type="GO" id="GO:0019631">
    <property type="term" value="P:quinate catabolic process"/>
    <property type="evidence" value="ECO:0007669"/>
    <property type="project" value="TreeGrafter"/>
</dbReference>
<dbReference type="CDD" id="cd00466">
    <property type="entry name" value="DHQase_II"/>
    <property type="match status" value="1"/>
</dbReference>
<dbReference type="Gene3D" id="3.40.50.9100">
    <property type="entry name" value="Dehydroquinase, class II"/>
    <property type="match status" value="1"/>
</dbReference>
<dbReference type="HAMAP" id="MF_00169">
    <property type="entry name" value="AroQ"/>
    <property type="match status" value="1"/>
</dbReference>
<dbReference type="InterPro" id="IPR001874">
    <property type="entry name" value="DHquinase_II"/>
</dbReference>
<dbReference type="InterPro" id="IPR036441">
    <property type="entry name" value="DHquinase_II_sf"/>
</dbReference>
<dbReference type="NCBIfam" id="TIGR01088">
    <property type="entry name" value="aroQ"/>
    <property type="match status" value="1"/>
</dbReference>
<dbReference type="NCBIfam" id="NF003805">
    <property type="entry name" value="PRK05395.1-2"/>
    <property type="match status" value="1"/>
</dbReference>
<dbReference type="NCBIfam" id="NF003806">
    <property type="entry name" value="PRK05395.1-3"/>
    <property type="match status" value="1"/>
</dbReference>
<dbReference type="NCBIfam" id="NF003807">
    <property type="entry name" value="PRK05395.1-4"/>
    <property type="match status" value="1"/>
</dbReference>
<dbReference type="PANTHER" id="PTHR21272">
    <property type="entry name" value="CATABOLIC 3-DEHYDROQUINASE"/>
    <property type="match status" value="1"/>
</dbReference>
<dbReference type="PANTHER" id="PTHR21272:SF3">
    <property type="entry name" value="CATABOLIC 3-DEHYDROQUINASE"/>
    <property type="match status" value="1"/>
</dbReference>
<dbReference type="Pfam" id="PF01220">
    <property type="entry name" value="DHquinase_II"/>
    <property type="match status" value="1"/>
</dbReference>
<dbReference type="PIRSF" id="PIRSF001399">
    <property type="entry name" value="DHquinase_II"/>
    <property type="match status" value="1"/>
</dbReference>
<dbReference type="SUPFAM" id="SSF52304">
    <property type="entry name" value="Type II 3-dehydroquinate dehydratase"/>
    <property type="match status" value="1"/>
</dbReference>
<sequence length="148" mass="16271">MKKVLVLHGINLNMFGKRDPAHYGTTTLKEIDARISEWAAELGFEVECFQTNHEGEMASRIHAAHEENVDAVVINAGAWTHYSYGIADALAILKAPIVEVHMSNIHAREEFRHHSVIAGLAKGQICGFGVDSYHLGLIAASNLIKVEN</sequence>
<accession>Q3A2J0</accession>
<protein>
    <recommendedName>
        <fullName evidence="1">3-dehydroquinate dehydratase</fullName>
        <shortName evidence="1">3-dehydroquinase</shortName>
        <ecNumber evidence="1">4.2.1.10</ecNumber>
    </recommendedName>
    <alternativeName>
        <fullName evidence="1">Type II DHQase</fullName>
    </alternativeName>
</protein>
<organism>
    <name type="scientific">Syntrophotalea carbinolica (strain DSM 2380 / NBRC 103641 / GraBd1)</name>
    <name type="common">Pelobacter carbinolicus</name>
    <dbReference type="NCBI Taxonomy" id="338963"/>
    <lineage>
        <taxon>Bacteria</taxon>
        <taxon>Pseudomonadati</taxon>
        <taxon>Thermodesulfobacteriota</taxon>
        <taxon>Desulfuromonadia</taxon>
        <taxon>Desulfuromonadales</taxon>
        <taxon>Syntrophotaleaceae</taxon>
        <taxon>Syntrophotalea</taxon>
    </lineage>
</organism>
<feature type="chain" id="PRO_1000071582" description="3-dehydroquinate dehydratase">
    <location>
        <begin position="1"/>
        <end position="148"/>
    </location>
</feature>
<feature type="active site" description="Proton acceptor" evidence="1">
    <location>
        <position position="23"/>
    </location>
</feature>
<feature type="active site" description="Proton donor" evidence="1">
    <location>
        <position position="101"/>
    </location>
</feature>
<feature type="binding site" evidence="1">
    <location>
        <position position="75"/>
    </location>
    <ligand>
        <name>substrate</name>
    </ligand>
</feature>
<feature type="binding site" evidence="1">
    <location>
        <position position="81"/>
    </location>
    <ligand>
        <name>substrate</name>
    </ligand>
</feature>
<feature type="binding site" evidence="1">
    <location>
        <position position="88"/>
    </location>
    <ligand>
        <name>substrate</name>
    </ligand>
</feature>
<feature type="binding site" evidence="1">
    <location>
        <begin position="102"/>
        <end position="103"/>
    </location>
    <ligand>
        <name>substrate</name>
    </ligand>
</feature>
<feature type="binding site" evidence="1">
    <location>
        <position position="112"/>
    </location>
    <ligand>
        <name>substrate</name>
    </ligand>
</feature>
<feature type="site" description="Transition state stabilizer" evidence="1">
    <location>
        <position position="18"/>
    </location>
</feature>
<gene>
    <name evidence="1" type="primary">aroQ</name>
    <name type="ordered locus">Pcar_2178</name>
</gene>